<accession>B5E4E3</accession>
<organism>
    <name type="scientific">Streptococcus pneumoniae serotype 19F (strain G54)</name>
    <dbReference type="NCBI Taxonomy" id="512566"/>
    <lineage>
        <taxon>Bacteria</taxon>
        <taxon>Bacillati</taxon>
        <taxon>Bacillota</taxon>
        <taxon>Bacilli</taxon>
        <taxon>Lactobacillales</taxon>
        <taxon>Streptococcaceae</taxon>
        <taxon>Streptococcus</taxon>
    </lineage>
</organism>
<reference key="1">
    <citation type="journal article" date="2001" name="Microb. Drug Resist.">
        <title>Annotated draft genomic sequence from a Streptococcus pneumoniae type 19F clinical isolate.</title>
        <authorList>
            <person name="Dopazo J."/>
            <person name="Mendoza A."/>
            <person name="Herrero J."/>
            <person name="Caldara F."/>
            <person name="Humbert Y."/>
            <person name="Friedli L."/>
            <person name="Guerrier M."/>
            <person name="Grand-Schenk E."/>
            <person name="Gandin C."/>
            <person name="de Francesco M."/>
            <person name="Polissi A."/>
            <person name="Buell G."/>
            <person name="Feger G."/>
            <person name="Garcia E."/>
            <person name="Peitsch M."/>
            <person name="Garcia-Bustos J.F."/>
        </authorList>
    </citation>
    <scope>NUCLEOTIDE SEQUENCE [LARGE SCALE GENOMIC DNA]</scope>
    <source>
        <strain>G54</strain>
    </source>
</reference>
<reference key="2">
    <citation type="submission" date="2008-03" db="EMBL/GenBank/DDBJ databases">
        <title>Pneumococcal beta glucoside metabolism investigated by whole genome comparison.</title>
        <authorList>
            <person name="Mulas L."/>
            <person name="Trappetti C."/>
            <person name="Hakenbeck R."/>
            <person name="Iannelli F."/>
            <person name="Pozzi G."/>
            <person name="Davidsen T.M."/>
            <person name="Tettelin H."/>
            <person name="Oggioni M."/>
        </authorList>
    </citation>
    <scope>NUCLEOTIDE SEQUENCE [LARGE SCALE GENOMIC DNA]</scope>
    <source>
        <strain>G54</strain>
    </source>
</reference>
<name>GLYA_STRP4</name>
<keyword id="KW-0028">Amino-acid biosynthesis</keyword>
<keyword id="KW-0963">Cytoplasm</keyword>
<keyword id="KW-0554">One-carbon metabolism</keyword>
<keyword id="KW-0663">Pyridoxal phosphate</keyword>
<keyword id="KW-0808">Transferase</keyword>
<evidence type="ECO:0000255" key="1">
    <source>
        <dbReference type="HAMAP-Rule" id="MF_00051"/>
    </source>
</evidence>
<dbReference type="EC" id="2.1.2.1" evidence="1"/>
<dbReference type="EMBL" id="CP001015">
    <property type="protein sequence ID" value="ACF55081.1"/>
    <property type="molecule type" value="Genomic_DNA"/>
</dbReference>
<dbReference type="KEGG" id="spx:SPG_0949"/>
<dbReference type="HOGENOM" id="CLU_022477_2_1_9"/>
<dbReference type="UniPathway" id="UPA00193"/>
<dbReference type="UniPathway" id="UPA00288">
    <property type="reaction ID" value="UER01023"/>
</dbReference>
<dbReference type="GO" id="GO:0005829">
    <property type="term" value="C:cytosol"/>
    <property type="evidence" value="ECO:0007669"/>
    <property type="project" value="TreeGrafter"/>
</dbReference>
<dbReference type="GO" id="GO:0004372">
    <property type="term" value="F:glycine hydroxymethyltransferase activity"/>
    <property type="evidence" value="ECO:0007669"/>
    <property type="project" value="UniProtKB-UniRule"/>
</dbReference>
<dbReference type="GO" id="GO:0030170">
    <property type="term" value="F:pyridoxal phosphate binding"/>
    <property type="evidence" value="ECO:0007669"/>
    <property type="project" value="UniProtKB-UniRule"/>
</dbReference>
<dbReference type="GO" id="GO:0019264">
    <property type="term" value="P:glycine biosynthetic process from serine"/>
    <property type="evidence" value="ECO:0007669"/>
    <property type="project" value="UniProtKB-UniRule"/>
</dbReference>
<dbReference type="GO" id="GO:0035999">
    <property type="term" value="P:tetrahydrofolate interconversion"/>
    <property type="evidence" value="ECO:0007669"/>
    <property type="project" value="UniProtKB-UniRule"/>
</dbReference>
<dbReference type="CDD" id="cd00378">
    <property type="entry name" value="SHMT"/>
    <property type="match status" value="1"/>
</dbReference>
<dbReference type="FunFam" id="3.40.640.10:FF:000001">
    <property type="entry name" value="Serine hydroxymethyltransferase"/>
    <property type="match status" value="1"/>
</dbReference>
<dbReference type="FunFam" id="3.90.1150.10:FF:000072">
    <property type="entry name" value="Serine hydroxymethyltransferase"/>
    <property type="match status" value="1"/>
</dbReference>
<dbReference type="Gene3D" id="3.90.1150.10">
    <property type="entry name" value="Aspartate Aminotransferase, domain 1"/>
    <property type="match status" value="1"/>
</dbReference>
<dbReference type="Gene3D" id="3.40.640.10">
    <property type="entry name" value="Type I PLP-dependent aspartate aminotransferase-like (Major domain)"/>
    <property type="match status" value="1"/>
</dbReference>
<dbReference type="HAMAP" id="MF_00051">
    <property type="entry name" value="SHMT"/>
    <property type="match status" value="1"/>
</dbReference>
<dbReference type="InterPro" id="IPR015424">
    <property type="entry name" value="PyrdxlP-dep_Trfase"/>
</dbReference>
<dbReference type="InterPro" id="IPR015421">
    <property type="entry name" value="PyrdxlP-dep_Trfase_major"/>
</dbReference>
<dbReference type="InterPro" id="IPR015422">
    <property type="entry name" value="PyrdxlP-dep_Trfase_small"/>
</dbReference>
<dbReference type="InterPro" id="IPR001085">
    <property type="entry name" value="Ser_HO-MeTrfase"/>
</dbReference>
<dbReference type="InterPro" id="IPR049943">
    <property type="entry name" value="Ser_HO-MeTrfase-like"/>
</dbReference>
<dbReference type="InterPro" id="IPR019798">
    <property type="entry name" value="Ser_HO-MeTrfase_PLP_BS"/>
</dbReference>
<dbReference type="InterPro" id="IPR039429">
    <property type="entry name" value="SHMT-like_dom"/>
</dbReference>
<dbReference type="NCBIfam" id="NF000586">
    <property type="entry name" value="PRK00011.1"/>
    <property type="match status" value="1"/>
</dbReference>
<dbReference type="PANTHER" id="PTHR11680">
    <property type="entry name" value="SERINE HYDROXYMETHYLTRANSFERASE"/>
    <property type="match status" value="1"/>
</dbReference>
<dbReference type="PANTHER" id="PTHR11680:SF35">
    <property type="entry name" value="SERINE HYDROXYMETHYLTRANSFERASE 1"/>
    <property type="match status" value="1"/>
</dbReference>
<dbReference type="Pfam" id="PF00464">
    <property type="entry name" value="SHMT"/>
    <property type="match status" value="1"/>
</dbReference>
<dbReference type="PIRSF" id="PIRSF000412">
    <property type="entry name" value="SHMT"/>
    <property type="match status" value="1"/>
</dbReference>
<dbReference type="SUPFAM" id="SSF53383">
    <property type="entry name" value="PLP-dependent transferases"/>
    <property type="match status" value="1"/>
</dbReference>
<dbReference type="PROSITE" id="PS00096">
    <property type="entry name" value="SHMT"/>
    <property type="match status" value="1"/>
</dbReference>
<protein>
    <recommendedName>
        <fullName evidence="1">Serine hydroxymethyltransferase</fullName>
        <shortName evidence="1">SHMT</shortName>
        <shortName evidence="1">Serine methylase</shortName>
        <ecNumber evidence="1">2.1.2.1</ecNumber>
    </recommendedName>
</protein>
<comment type="function">
    <text evidence="1">Catalyzes the reversible interconversion of serine and glycine with tetrahydrofolate (THF) serving as the one-carbon carrier. This reaction serves as the major source of one-carbon groups required for the biosynthesis of purines, thymidylate, methionine, and other important biomolecules. Also exhibits THF-independent aldolase activity toward beta-hydroxyamino acids, producing glycine and aldehydes, via a retro-aldol mechanism.</text>
</comment>
<comment type="catalytic activity">
    <reaction evidence="1">
        <text>(6R)-5,10-methylene-5,6,7,8-tetrahydrofolate + glycine + H2O = (6S)-5,6,7,8-tetrahydrofolate + L-serine</text>
        <dbReference type="Rhea" id="RHEA:15481"/>
        <dbReference type="ChEBI" id="CHEBI:15377"/>
        <dbReference type="ChEBI" id="CHEBI:15636"/>
        <dbReference type="ChEBI" id="CHEBI:33384"/>
        <dbReference type="ChEBI" id="CHEBI:57305"/>
        <dbReference type="ChEBI" id="CHEBI:57453"/>
        <dbReference type="EC" id="2.1.2.1"/>
    </reaction>
</comment>
<comment type="cofactor">
    <cofactor evidence="1">
        <name>pyridoxal 5'-phosphate</name>
        <dbReference type="ChEBI" id="CHEBI:597326"/>
    </cofactor>
</comment>
<comment type="pathway">
    <text evidence="1">One-carbon metabolism; tetrahydrofolate interconversion.</text>
</comment>
<comment type="pathway">
    <text evidence="1">Amino-acid biosynthesis; glycine biosynthesis; glycine from L-serine: step 1/1.</text>
</comment>
<comment type="subunit">
    <text evidence="1">Homodimer.</text>
</comment>
<comment type="subcellular location">
    <subcellularLocation>
        <location evidence="1">Cytoplasm</location>
    </subcellularLocation>
</comment>
<comment type="similarity">
    <text evidence="1">Belongs to the SHMT family.</text>
</comment>
<sequence length="418" mass="45243">MIFDKDDFKAYDADLWNAIAKEEERQQNNIELIASENVVSKAVMAAQGSILTNKYAEGYPGRRYYGGTDVVDVVETLAIERAKEIFGAKFANVQPHSGSQANCAAYMSLIEPGDTVMGMDLASGGHLTHGAPVSFSGQTYNFVSYSVDPETELLDFDAILKQAQEVKPKLIVAGASAYSQIIDFSKFREIADAVGAKLMVDMAHIAGLVAAGLHPSPVPYAHITTTTTHKTLRGPRGGLILTNDEELAKKINSAIFPGIQGGPLXHVVAAKAVSFKEVLDPAFKEYAANVIKNSKAMADVFLQDPDFRIISGGTENHLFLVDVTKVVENGKVAQNLLDEVNITLNKNSIPYESLSPFKTSGIRIGAAAITARGFGEEESRKVAELIIKTLKNSENEAVLEEVRSAVKELTDAFLLYED</sequence>
<feature type="chain" id="PRO_1000091585" description="Serine hydroxymethyltransferase">
    <location>
        <begin position="1"/>
        <end position="418"/>
    </location>
</feature>
<feature type="binding site" evidence="1">
    <location>
        <position position="121"/>
    </location>
    <ligand>
        <name>(6S)-5,6,7,8-tetrahydrofolate</name>
        <dbReference type="ChEBI" id="CHEBI:57453"/>
    </ligand>
</feature>
<feature type="binding site" evidence="1">
    <location>
        <begin position="125"/>
        <end position="127"/>
    </location>
    <ligand>
        <name>(6S)-5,6,7,8-tetrahydrofolate</name>
        <dbReference type="ChEBI" id="CHEBI:57453"/>
    </ligand>
</feature>
<feature type="binding site" evidence="1">
    <location>
        <position position="246"/>
    </location>
    <ligand>
        <name>(6S)-5,6,7,8-tetrahydrofolate</name>
        <dbReference type="ChEBI" id="CHEBI:57453"/>
    </ligand>
</feature>
<feature type="binding site" evidence="1">
    <location>
        <begin position="355"/>
        <end position="357"/>
    </location>
    <ligand>
        <name>(6S)-5,6,7,8-tetrahydrofolate</name>
        <dbReference type="ChEBI" id="CHEBI:57453"/>
    </ligand>
</feature>
<feature type="site" description="Plays an important role in substrate specificity" evidence="1">
    <location>
        <position position="229"/>
    </location>
</feature>
<feature type="modified residue" description="N6-(pyridoxal phosphate)lysine" evidence="1">
    <location>
        <position position="230"/>
    </location>
</feature>
<proteinExistence type="inferred from homology"/>
<gene>
    <name evidence="1" type="primary">glyA</name>
    <name type="ordered locus">SPG_0949</name>
</gene>